<gene>
    <name evidence="2" type="primary">UBA4</name>
    <name type="ordered locus">CAALFM_C110930CA</name>
    <name type="ORF">CaO19.2324</name>
    <name type="ORF">CaO19.9860</name>
</gene>
<feature type="chain" id="PRO_0000369223" description="Adenylyltransferase and sulfurtransferase UBA4">
    <location>
        <begin position="1"/>
        <end position="438"/>
    </location>
</feature>
<feature type="domain" description="Rhodanese" evidence="2">
    <location>
        <begin position="340"/>
        <end position="436"/>
    </location>
</feature>
<feature type="active site" description="Glycyl thioester intermediate; for adenylyltransferase activity" evidence="2">
    <location>
        <position position="229"/>
    </location>
</feature>
<feature type="active site" description="Cysteine persulfide intermediate; for sulfurtransferase activity" evidence="2">
    <location>
        <position position="396"/>
    </location>
</feature>
<feature type="binding site" evidence="2">
    <location>
        <position position="81"/>
    </location>
    <ligand>
        <name>ATP</name>
        <dbReference type="ChEBI" id="CHEBI:30616"/>
    </ligand>
</feature>
<feature type="binding site" evidence="2">
    <location>
        <position position="102"/>
    </location>
    <ligand>
        <name>ATP</name>
        <dbReference type="ChEBI" id="CHEBI:30616"/>
    </ligand>
</feature>
<feature type="binding site" evidence="2">
    <location>
        <begin position="109"/>
        <end position="113"/>
    </location>
    <ligand>
        <name>ATP</name>
        <dbReference type="ChEBI" id="CHEBI:30616"/>
    </ligand>
</feature>
<feature type="binding site" evidence="2">
    <location>
        <position position="126"/>
    </location>
    <ligand>
        <name>ATP</name>
        <dbReference type="ChEBI" id="CHEBI:30616"/>
    </ligand>
</feature>
<feature type="binding site" evidence="2">
    <location>
        <begin position="170"/>
        <end position="171"/>
    </location>
    <ligand>
        <name>ATP</name>
        <dbReference type="ChEBI" id="CHEBI:30616"/>
    </ligand>
</feature>
<feature type="binding site" evidence="2">
    <location>
        <position position="212"/>
    </location>
    <ligand>
        <name>Zn(2+)</name>
        <dbReference type="ChEBI" id="CHEBI:29105"/>
    </ligand>
</feature>
<feature type="binding site" evidence="2">
    <location>
        <position position="215"/>
    </location>
    <ligand>
        <name>Zn(2+)</name>
        <dbReference type="ChEBI" id="CHEBI:29105"/>
    </ligand>
</feature>
<feature type="binding site" evidence="2">
    <location>
        <position position="290"/>
    </location>
    <ligand>
        <name>Zn(2+)</name>
        <dbReference type="ChEBI" id="CHEBI:29105"/>
    </ligand>
</feature>
<feature type="binding site" evidence="2">
    <location>
        <position position="293"/>
    </location>
    <ligand>
        <name>Zn(2+)</name>
        <dbReference type="ChEBI" id="CHEBI:29105"/>
    </ligand>
</feature>
<organism>
    <name type="scientific">Candida albicans (strain SC5314 / ATCC MYA-2876)</name>
    <name type="common">Yeast</name>
    <dbReference type="NCBI Taxonomy" id="237561"/>
    <lineage>
        <taxon>Eukaryota</taxon>
        <taxon>Fungi</taxon>
        <taxon>Dikarya</taxon>
        <taxon>Ascomycota</taxon>
        <taxon>Saccharomycotina</taxon>
        <taxon>Pichiomycetes</taxon>
        <taxon>Debaryomycetaceae</taxon>
        <taxon>Candida/Lodderomyces clade</taxon>
        <taxon>Candida</taxon>
    </lineage>
</organism>
<sequence>MSEPSKEELLARIAQLELENEQLKQQNGKKSQHEQFNKIDDNFSLDEYKRYGRQMIVPQFGSLESQIKLKNSKVLVVGAGGLGSPALLYLSSAGIGKIGIIDPDTVDTSNLHRQVIHNTEMVGEFKCISAQNYINKLNPHVVVEVYPTALNNDNAFGIVSQYDLVLDCTDHPAVRYLINDVCVLLGKTIVSGSGLKSDGQLTVLNFANSGPCYRCFYPQPPSPDSVTSCSDGGVIGPAIGLVGVAMAVETIKIITGYYTKDNFVPFLASYSAYPQQQLRVFKMRKRQKDCAVCGENPQISQRMIEDGTINYKTFCGRATFDPIDDKFRVSPKDYDSVVQNKKKHILIDVRPREQFQITHLPNAINVQWDPTFRKADAIEQYLPDDSTKDDEIYVVCRFGNDSQLAAKKLIGMGYPNVRDIIGGLDKWSDDVDSKIPKY</sequence>
<comment type="function">
    <text evidence="2">Plays a central role in 2-thiolation of mcm(5)S(2)U at tRNA wobble positions of cytosolic tRNA(Lys), tRNA(Glu) and tRNA(Gln). Acts by mediating the C-terminal thiocarboxylation of sulfur carrier URM1. Its N-terminus first activates URM1 as acyl-adenylate (-COAMP), then the persulfide sulfur on the catalytic cysteine is transferred to URM1 to form thiocarboxylation (-COSH) of its C-terminus. The reaction probably involves hydrogen sulfide that is generated from the persulfide intermediate and that acts as a nucleophile towards URM1. Subsequently, a transient disulfide bond is formed. Does not use thiosulfate as sulfur donor; NFS1 probably acting as a sulfur donor for thiocarboxylation reactions. Prior mcm(5) tRNA modification by the elongator complex is required for 2-thiolation. May also be involved in protein urmylation.</text>
</comment>
<comment type="cofactor">
    <cofactor evidence="2">
        <name>Zn(2+)</name>
        <dbReference type="ChEBI" id="CHEBI:29105"/>
    </cofactor>
    <text evidence="2">Binds 1 zinc ion per subunit.</text>
</comment>
<comment type="pathway">
    <text evidence="2">tRNA modification; 5-methoxycarbonylmethyl-2-thiouridine-tRNA biosynthesis.</text>
</comment>
<comment type="subcellular location">
    <subcellularLocation>
        <location evidence="1">Cytoplasm</location>
        <location evidence="1">Cytosol</location>
    </subcellularLocation>
</comment>
<comment type="similarity">
    <text evidence="2">In the N-terminal section; belongs to the HesA/MoeB/ThiF family. UBA4 subfamily.</text>
</comment>
<proteinExistence type="inferred from homology"/>
<name>UBA4_CANAL</name>
<protein>
    <recommendedName>
        <fullName evidence="2">Adenylyltransferase and sulfurtransferase UBA4</fullName>
    </recommendedName>
    <alternativeName>
        <fullName evidence="2">Ubiquitin-like protein activator 4</fullName>
    </alternativeName>
    <domain>
        <recommendedName>
            <fullName evidence="2">Adenylyltransferase UBA4</fullName>
            <ecNumber evidence="2">2.7.7.-</ecNumber>
        </recommendedName>
    </domain>
    <domain>
        <recommendedName>
            <fullName evidence="2">Sulfurtransferase UBA4</fullName>
            <ecNumber evidence="2">2.8.1.-</ecNumber>
        </recommendedName>
    </domain>
</protein>
<keyword id="KW-0067">ATP-binding</keyword>
<keyword id="KW-0963">Cytoplasm</keyword>
<keyword id="KW-0479">Metal-binding</keyword>
<keyword id="KW-0511">Multifunctional enzyme</keyword>
<keyword id="KW-0547">Nucleotide-binding</keyword>
<keyword id="KW-0548">Nucleotidyltransferase</keyword>
<keyword id="KW-1185">Reference proteome</keyword>
<keyword id="KW-0808">Transferase</keyword>
<keyword id="KW-0819">tRNA processing</keyword>
<keyword id="KW-0833">Ubl conjugation pathway</keyword>
<keyword id="KW-0862">Zinc</keyword>
<evidence type="ECO:0000250" key="1">
    <source>
        <dbReference type="UniProtKB" id="P38820"/>
    </source>
</evidence>
<evidence type="ECO:0000255" key="2">
    <source>
        <dbReference type="HAMAP-Rule" id="MF_03049"/>
    </source>
</evidence>
<dbReference type="EC" id="2.7.7.-" evidence="2"/>
<dbReference type="EC" id="2.8.1.-" evidence="2"/>
<dbReference type="EMBL" id="CP017623">
    <property type="protein sequence ID" value="AOW26719.1"/>
    <property type="molecule type" value="Genomic_DNA"/>
</dbReference>
<dbReference type="RefSeq" id="XP_713929.1">
    <property type="nucleotide sequence ID" value="XM_708836.2"/>
</dbReference>
<dbReference type="SMR" id="Q59WH7"/>
<dbReference type="FunCoup" id="Q59WH7">
    <property type="interactions" value="885"/>
</dbReference>
<dbReference type="STRING" id="237561.Q59WH7"/>
<dbReference type="EnsemblFungi" id="C1_10930C_A-T">
    <property type="protein sequence ID" value="C1_10930C_A-T-p1"/>
    <property type="gene ID" value="C1_10930C_A"/>
</dbReference>
<dbReference type="GeneID" id="3644432"/>
<dbReference type="KEGG" id="cal:CAALFM_C110930CA"/>
<dbReference type="CGD" id="CAL0000183559">
    <property type="gene designation" value="UBA4"/>
</dbReference>
<dbReference type="VEuPathDB" id="FungiDB:C1_10930C_A"/>
<dbReference type="eggNOG" id="KOG2017">
    <property type="taxonomic scope" value="Eukaryota"/>
</dbReference>
<dbReference type="HOGENOM" id="CLU_013325_1_0_1"/>
<dbReference type="InParanoid" id="Q59WH7"/>
<dbReference type="OrthoDB" id="10261062at2759"/>
<dbReference type="UniPathway" id="UPA00988"/>
<dbReference type="PRO" id="PR:Q59WH7"/>
<dbReference type="Proteomes" id="UP000000559">
    <property type="component" value="Chromosome 1"/>
</dbReference>
<dbReference type="GO" id="GO:0005737">
    <property type="term" value="C:cytoplasm"/>
    <property type="evidence" value="ECO:0000318"/>
    <property type="project" value="GO_Central"/>
</dbReference>
<dbReference type="GO" id="GO:0005829">
    <property type="term" value="C:cytosol"/>
    <property type="evidence" value="ECO:0007669"/>
    <property type="project" value="InterPro"/>
</dbReference>
<dbReference type="GO" id="GO:0070566">
    <property type="term" value="F:adenylyltransferase activity"/>
    <property type="evidence" value="ECO:0007669"/>
    <property type="project" value="InterPro"/>
</dbReference>
<dbReference type="GO" id="GO:0005524">
    <property type="term" value="F:ATP binding"/>
    <property type="evidence" value="ECO:0007669"/>
    <property type="project" value="UniProtKB-KW"/>
</dbReference>
<dbReference type="GO" id="GO:0046872">
    <property type="term" value="F:metal ion binding"/>
    <property type="evidence" value="ECO:0007669"/>
    <property type="project" value="UniProtKB-KW"/>
</dbReference>
<dbReference type="GO" id="GO:0016779">
    <property type="term" value="F:nucleotidyltransferase activity"/>
    <property type="evidence" value="ECO:0000318"/>
    <property type="project" value="GO_Central"/>
</dbReference>
<dbReference type="GO" id="GO:0004792">
    <property type="term" value="F:thiosulfate-cyanide sulfurtransferase activity"/>
    <property type="evidence" value="ECO:0000318"/>
    <property type="project" value="GO_Central"/>
</dbReference>
<dbReference type="GO" id="GO:0042292">
    <property type="term" value="F:URM1 activating enzyme activity"/>
    <property type="evidence" value="ECO:0000318"/>
    <property type="project" value="GO_Central"/>
</dbReference>
<dbReference type="GO" id="GO:0032447">
    <property type="term" value="P:protein urmylation"/>
    <property type="evidence" value="ECO:0000318"/>
    <property type="project" value="GO_Central"/>
</dbReference>
<dbReference type="GO" id="GO:0002143">
    <property type="term" value="P:tRNA wobble position uridine thiolation"/>
    <property type="evidence" value="ECO:0000318"/>
    <property type="project" value="GO_Central"/>
</dbReference>
<dbReference type="CDD" id="cd01526">
    <property type="entry name" value="RHOD_ThiF"/>
    <property type="match status" value="1"/>
</dbReference>
<dbReference type="CDD" id="cd00757">
    <property type="entry name" value="ThiF_MoeB_HesA_family"/>
    <property type="match status" value="1"/>
</dbReference>
<dbReference type="FunFam" id="3.40.250.10:FF:000014">
    <property type="entry name" value="Adenylyltransferase and sulfurtransferase MOCS3"/>
    <property type="match status" value="1"/>
</dbReference>
<dbReference type="FunFam" id="3.40.50.720:FF:000033">
    <property type="entry name" value="Adenylyltransferase and sulfurtransferase MOCS3"/>
    <property type="match status" value="1"/>
</dbReference>
<dbReference type="Gene3D" id="3.40.50.720">
    <property type="entry name" value="NAD(P)-binding Rossmann-like Domain"/>
    <property type="match status" value="1"/>
</dbReference>
<dbReference type="Gene3D" id="3.40.250.10">
    <property type="entry name" value="Rhodanese-like domain"/>
    <property type="match status" value="1"/>
</dbReference>
<dbReference type="HAMAP" id="MF_03049">
    <property type="entry name" value="MOCS3_Uba4"/>
    <property type="match status" value="1"/>
</dbReference>
<dbReference type="InterPro" id="IPR028885">
    <property type="entry name" value="MOCS3/Uba4"/>
</dbReference>
<dbReference type="InterPro" id="IPR001763">
    <property type="entry name" value="Rhodanese-like_dom"/>
</dbReference>
<dbReference type="InterPro" id="IPR036873">
    <property type="entry name" value="Rhodanese-like_dom_sf"/>
</dbReference>
<dbReference type="InterPro" id="IPR045886">
    <property type="entry name" value="ThiF/MoeB/HesA"/>
</dbReference>
<dbReference type="InterPro" id="IPR000594">
    <property type="entry name" value="ThiF_NAD_FAD-bd"/>
</dbReference>
<dbReference type="InterPro" id="IPR035985">
    <property type="entry name" value="Ubiquitin-activating_enz"/>
</dbReference>
<dbReference type="PANTHER" id="PTHR10953:SF102">
    <property type="entry name" value="ADENYLYLTRANSFERASE AND SULFURTRANSFERASE MOCS3"/>
    <property type="match status" value="1"/>
</dbReference>
<dbReference type="PANTHER" id="PTHR10953">
    <property type="entry name" value="UBIQUITIN-ACTIVATING ENZYME E1"/>
    <property type="match status" value="1"/>
</dbReference>
<dbReference type="Pfam" id="PF00581">
    <property type="entry name" value="Rhodanese"/>
    <property type="match status" value="1"/>
</dbReference>
<dbReference type="Pfam" id="PF00899">
    <property type="entry name" value="ThiF"/>
    <property type="match status" value="1"/>
</dbReference>
<dbReference type="SMART" id="SM00450">
    <property type="entry name" value="RHOD"/>
    <property type="match status" value="1"/>
</dbReference>
<dbReference type="SUPFAM" id="SSF69572">
    <property type="entry name" value="Activating enzymes of the ubiquitin-like proteins"/>
    <property type="match status" value="1"/>
</dbReference>
<dbReference type="PROSITE" id="PS50206">
    <property type="entry name" value="RHODANESE_3"/>
    <property type="match status" value="1"/>
</dbReference>
<accession>Q59WH7</accession>
<accession>A0A1D8PF04</accession>
<reference key="1">
    <citation type="journal article" date="2004" name="Proc. Natl. Acad. Sci. U.S.A.">
        <title>The diploid genome sequence of Candida albicans.</title>
        <authorList>
            <person name="Jones T."/>
            <person name="Federspiel N.A."/>
            <person name="Chibana H."/>
            <person name="Dungan J."/>
            <person name="Kalman S."/>
            <person name="Magee B.B."/>
            <person name="Newport G."/>
            <person name="Thorstenson Y.R."/>
            <person name="Agabian N."/>
            <person name="Magee P.T."/>
            <person name="Davis R.W."/>
            <person name="Scherer S."/>
        </authorList>
    </citation>
    <scope>NUCLEOTIDE SEQUENCE [LARGE SCALE GENOMIC DNA]</scope>
    <source>
        <strain>SC5314 / ATCC MYA-2876</strain>
    </source>
</reference>
<reference key="2">
    <citation type="journal article" date="2007" name="Genome Biol.">
        <title>Assembly of the Candida albicans genome into sixteen supercontigs aligned on the eight chromosomes.</title>
        <authorList>
            <person name="van het Hoog M."/>
            <person name="Rast T.J."/>
            <person name="Martchenko M."/>
            <person name="Grindle S."/>
            <person name="Dignard D."/>
            <person name="Hogues H."/>
            <person name="Cuomo C."/>
            <person name="Berriman M."/>
            <person name="Scherer S."/>
            <person name="Magee B.B."/>
            <person name="Whiteway M."/>
            <person name="Chibana H."/>
            <person name="Nantel A."/>
            <person name="Magee P.T."/>
        </authorList>
    </citation>
    <scope>GENOME REANNOTATION</scope>
    <source>
        <strain>SC5314 / ATCC MYA-2876</strain>
    </source>
</reference>
<reference key="3">
    <citation type="journal article" date="2013" name="Genome Biol.">
        <title>Assembly of a phased diploid Candida albicans genome facilitates allele-specific measurements and provides a simple model for repeat and indel structure.</title>
        <authorList>
            <person name="Muzzey D."/>
            <person name="Schwartz K."/>
            <person name="Weissman J.S."/>
            <person name="Sherlock G."/>
        </authorList>
    </citation>
    <scope>NUCLEOTIDE SEQUENCE [LARGE SCALE GENOMIC DNA]</scope>
    <scope>GENOME REANNOTATION</scope>
    <source>
        <strain>SC5314 / ATCC MYA-2876</strain>
    </source>
</reference>